<keyword id="KW-1015">Disulfide bond</keyword>
<keyword id="KW-0325">Glycoprotein</keyword>
<keyword id="KW-0393">Immunoglobulin domain</keyword>
<keyword id="KW-0433">Leucine-rich repeat</keyword>
<keyword id="KW-1185">Reference proteome</keyword>
<keyword id="KW-0677">Repeat</keyword>
<keyword id="KW-0964">Secreted</keyword>
<keyword id="KW-0732">Signal</keyword>
<reference key="1">
    <citation type="submission" date="2004-11" db="EMBL/GenBank/DDBJ databases">
        <authorList>
            <consortium name="The German cDNA consortium"/>
        </authorList>
    </citation>
    <scope>NUCLEOTIDE SEQUENCE [LARGE SCALE MRNA]</scope>
    <source>
        <tissue>Brain cortex</tissue>
    </source>
</reference>
<accession>Q5NVQ6</accession>
<proteinExistence type="evidence at transcript level"/>
<name>ISLR_PONAB</name>
<comment type="subcellular location">
    <subcellularLocation>
        <location evidence="3">Secreted</location>
    </subcellularLocation>
</comment>
<feature type="signal peptide" evidence="1">
    <location>
        <begin position="1"/>
        <end position="18"/>
    </location>
</feature>
<feature type="chain" id="PRO_0000312210" description="Immunoglobulin superfamily containing leucine-rich repeat protein">
    <location>
        <begin position="19"/>
        <end position="428"/>
    </location>
</feature>
<feature type="domain" description="LRRNT">
    <location>
        <begin position="19"/>
        <end position="50"/>
    </location>
</feature>
<feature type="repeat" description="LRR 1">
    <location>
        <begin position="51"/>
        <end position="72"/>
    </location>
</feature>
<feature type="repeat" description="LRR 2">
    <location>
        <begin position="75"/>
        <end position="96"/>
    </location>
</feature>
<feature type="repeat" description="LRR 3">
    <location>
        <begin position="99"/>
        <end position="122"/>
    </location>
</feature>
<feature type="repeat" description="LRR 4">
    <location>
        <begin position="123"/>
        <end position="144"/>
    </location>
</feature>
<feature type="repeat" description="LRR 5">
    <location>
        <begin position="147"/>
        <end position="168"/>
    </location>
</feature>
<feature type="domain" description="LRRCT">
    <location>
        <begin position="180"/>
        <end position="231"/>
    </location>
</feature>
<feature type="domain" description="Ig-like">
    <location>
        <begin position="232"/>
        <end position="343"/>
    </location>
</feature>
<feature type="glycosylation site" description="N-linked (GlcNAc...) asparagine" evidence="1">
    <location>
        <position position="51"/>
    </location>
</feature>
<feature type="glycosylation site" description="N-linked (GlcNAc...) asparagine" evidence="1">
    <location>
        <position position="309"/>
    </location>
</feature>
<feature type="disulfide bond" evidence="2">
    <location>
        <begin position="257"/>
        <end position="327"/>
    </location>
</feature>
<protein>
    <recommendedName>
        <fullName>Immunoglobulin superfamily containing leucine-rich repeat protein</fullName>
    </recommendedName>
</protein>
<gene>
    <name type="primary">ISLR</name>
</gene>
<sequence>MQELHLLWWALLLGLAQACPEPCDCGEKYGFQIADCAYRDLEAVPPGFPANVTALSLSANRLPGLPEGAFREVPLLQSLWLAHNEIRMVAAGALASLSHLKSLDLSHNLISDFAWSDLHNLSALQLLKMDSNELTFIPRDAFRSLHALRSLQLNHNRLHTLAEGTFTPLTALSHLQINDNPFDCTCGIVWLKTWALATAVSIPEQDNIACTSPHVLKGTPLSRLPPLPCSAPSVQLSYQPSQDGAELRPGFVLALHCDVDGQPAPQLHWHIQIPSGIVEITSPNVGTDGRALPGTPVASSQPRFQAFANGSLLIPDFGKLEEGTYSCLATNELGSAESSVDVALATPGEGGEDTLGRRFHGKAVEGKGCYTVDNEVQPSGPEDNVVIIYLSRAGNPEAAVAEGVPGQLPPGLLLLGQSLLLLFFLTSS</sequence>
<organism>
    <name type="scientific">Pongo abelii</name>
    <name type="common">Sumatran orangutan</name>
    <name type="synonym">Pongo pygmaeus abelii</name>
    <dbReference type="NCBI Taxonomy" id="9601"/>
    <lineage>
        <taxon>Eukaryota</taxon>
        <taxon>Metazoa</taxon>
        <taxon>Chordata</taxon>
        <taxon>Craniata</taxon>
        <taxon>Vertebrata</taxon>
        <taxon>Euteleostomi</taxon>
        <taxon>Mammalia</taxon>
        <taxon>Eutheria</taxon>
        <taxon>Euarchontoglires</taxon>
        <taxon>Primates</taxon>
        <taxon>Haplorrhini</taxon>
        <taxon>Catarrhini</taxon>
        <taxon>Hominidae</taxon>
        <taxon>Pongo</taxon>
    </lineage>
</organism>
<dbReference type="EMBL" id="CR925954">
    <property type="protein sequence ID" value="CAI29607.1"/>
    <property type="molecule type" value="mRNA"/>
</dbReference>
<dbReference type="RefSeq" id="NP_001127071.1">
    <property type="nucleotide sequence ID" value="NM_001133599.1"/>
</dbReference>
<dbReference type="SMR" id="Q5NVQ6"/>
<dbReference type="FunCoup" id="Q5NVQ6">
    <property type="interactions" value="74"/>
</dbReference>
<dbReference type="STRING" id="9601.ENSPPYP00000007524"/>
<dbReference type="GlyCosmos" id="Q5NVQ6">
    <property type="glycosylation" value="2 sites, No reported glycans"/>
</dbReference>
<dbReference type="GeneID" id="100174101"/>
<dbReference type="KEGG" id="pon:100174101"/>
<dbReference type="CTD" id="3671"/>
<dbReference type="eggNOG" id="KOG0619">
    <property type="taxonomic scope" value="Eukaryota"/>
</dbReference>
<dbReference type="InParanoid" id="Q5NVQ6"/>
<dbReference type="OrthoDB" id="2151624at2759"/>
<dbReference type="Proteomes" id="UP000001595">
    <property type="component" value="Unplaced"/>
</dbReference>
<dbReference type="GO" id="GO:0005576">
    <property type="term" value="C:extracellular region"/>
    <property type="evidence" value="ECO:0007669"/>
    <property type="project" value="UniProtKB-SubCell"/>
</dbReference>
<dbReference type="FunFam" id="2.60.40.10:FF:001692">
    <property type="entry name" value="Immunoglobulin superfamily containing leucine-rich repeat protein"/>
    <property type="match status" value="1"/>
</dbReference>
<dbReference type="FunFam" id="3.80.10.10:FF:000058">
    <property type="entry name" value="immunoglobulin superfamily containing leucine-rich repeat protein 2"/>
    <property type="match status" value="1"/>
</dbReference>
<dbReference type="Gene3D" id="2.60.40.10">
    <property type="entry name" value="Immunoglobulins"/>
    <property type="match status" value="1"/>
</dbReference>
<dbReference type="Gene3D" id="3.80.10.10">
    <property type="entry name" value="Ribonuclease Inhibitor"/>
    <property type="match status" value="1"/>
</dbReference>
<dbReference type="InterPro" id="IPR000483">
    <property type="entry name" value="Cys-rich_flank_reg_C"/>
</dbReference>
<dbReference type="InterPro" id="IPR007110">
    <property type="entry name" value="Ig-like_dom"/>
</dbReference>
<dbReference type="InterPro" id="IPR036179">
    <property type="entry name" value="Ig-like_dom_sf"/>
</dbReference>
<dbReference type="InterPro" id="IPR013783">
    <property type="entry name" value="Ig-like_fold"/>
</dbReference>
<dbReference type="InterPro" id="IPR003598">
    <property type="entry name" value="Ig_sub2"/>
</dbReference>
<dbReference type="InterPro" id="IPR001611">
    <property type="entry name" value="Leu-rich_rpt"/>
</dbReference>
<dbReference type="InterPro" id="IPR003591">
    <property type="entry name" value="Leu-rich_rpt_typical-subtyp"/>
</dbReference>
<dbReference type="InterPro" id="IPR032675">
    <property type="entry name" value="LRR_dom_sf"/>
</dbReference>
<dbReference type="PANTHER" id="PTHR24366">
    <property type="entry name" value="IG(IMMUNOGLOBULIN) AND LRR(LEUCINE RICH REPEAT) DOMAINS"/>
    <property type="match status" value="1"/>
</dbReference>
<dbReference type="PANTHER" id="PTHR24366:SF14">
    <property type="entry name" value="IMMUNOGLOBULIN SUPERFAMILY CONTAINING LEUCINE-RICH REPEAT PROTEIN"/>
    <property type="match status" value="1"/>
</dbReference>
<dbReference type="Pfam" id="PF13855">
    <property type="entry name" value="LRR_8"/>
    <property type="match status" value="2"/>
</dbReference>
<dbReference type="SMART" id="SM00408">
    <property type="entry name" value="IGc2"/>
    <property type="match status" value="1"/>
</dbReference>
<dbReference type="SMART" id="SM00369">
    <property type="entry name" value="LRR_TYP"/>
    <property type="match status" value="5"/>
</dbReference>
<dbReference type="SMART" id="SM00082">
    <property type="entry name" value="LRRCT"/>
    <property type="match status" value="1"/>
</dbReference>
<dbReference type="SUPFAM" id="SSF48726">
    <property type="entry name" value="Immunoglobulin"/>
    <property type="match status" value="1"/>
</dbReference>
<dbReference type="SUPFAM" id="SSF52058">
    <property type="entry name" value="L domain-like"/>
    <property type="match status" value="1"/>
</dbReference>
<dbReference type="PROSITE" id="PS50835">
    <property type="entry name" value="IG_LIKE"/>
    <property type="match status" value="1"/>
</dbReference>
<dbReference type="PROSITE" id="PS51450">
    <property type="entry name" value="LRR"/>
    <property type="match status" value="5"/>
</dbReference>
<evidence type="ECO:0000255" key="1"/>
<evidence type="ECO:0000255" key="2">
    <source>
        <dbReference type="PROSITE-ProRule" id="PRU00114"/>
    </source>
</evidence>
<evidence type="ECO:0000305" key="3"/>